<proteinExistence type="inferred from homology"/>
<feature type="chain" id="PRO_0000448209" description="Protein OPG036">
    <location>
        <begin position="1"/>
        <end position="177"/>
    </location>
</feature>
<name>PG036_VARV</name>
<accession>P0DSQ2</accession>
<accession>P34019</accession>
<keyword id="KW-0244">Early protein</keyword>
<keyword id="KW-1048">Host nucleus</keyword>
<keyword id="KW-0945">Host-virus interaction</keyword>
<keyword id="KW-1090">Inhibition of host innate immune response by virus</keyword>
<keyword id="KW-1092">Inhibition of host IRF3 by virus</keyword>
<keyword id="KW-1113">Inhibition of host RLR pathway by virus</keyword>
<keyword id="KW-0899">Viral immunoevasion</keyword>
<gene>
    <name type="primary">OPG036</name>
    <name type="synonym">N2L</name>
    <name type="synonym">P2L</name>
</gene>
<dbReference type="EMBL" id="L22579">
    <property type="protein sequence ID" value="AAA60765.1"/>
    <property type="molecule type" value="Genomic_DNA"/>
</dbReference>
<dbReference type="EMBL" id="U18340">
    <property type="protein sequence ID" value="AAA69428.1"/>
    <property type="molecule type" value="Genomic_DNA"/>
</dbReference>
<dbReference type="EMBL" id="U18337">
    <property type="protein sequence ID" value="AAA69322.1"/>
    <property type="molecule type" value="Genomic_DNA"/>
</dbReference>
<dbReference type="PIR" id="T28455">
    <property type="entry name" value="T28455"/>
</dbReference>
<dbReference type="RefSeq" id="NP_042061.1">
    <property type="nucleotide sequence ID" value="NC_001611.1"/>
</dbReference>
<dbReference type="GeneID" id="1486482"/>
<dbReference type="KEGG" id="vg:1486482"/>
<dbReference type="Proteomes" id="UP000119805">
    <property type="component" value="Segment"/>
</dbReference>
<dbReference type="GO" id="GO:0042025">
    <property type="term" value="C:host cell nucleus"/>
    <property type="evidence" value="ECO:0007669"/>
    <property type="project" value="UniProtKB-SubCell"/>
</dbReference>
<dbReference type="GO" id="GO:0039548">
    <property type="term" value="P:symbiont-mediated suppression of host cytoplasmic pattern recognition receptor signaling pathway via inhibition of IRF3 activity"/>
    <property type="evidence" value="ECO:0007669"/>
    <property type="project" value="UniProtKB-KW"/>
</dbReference>
<dbReference type="InterPro" id="IPR022819">
    <property type="entry name" value="Poxvirus_Bcl-2-like"/>
</dbReference>
<dbReference type="Pfam" id="PF06227">
    <property type="entry name" value="Poxv_Bcl-2-like"/>
    <property type="match status" value="1"/>
</dbReference>
<protein>
    <recommendedName>
        <fullName>Protein OPG036</fullName>
    </recommendedName>
    <alternativeName>
        <fullName>Protein N2</fullName>
    </alternativeName>
</protein>
<reference key="1">
    <citation type="journal article" date="1993" name="Nature">
        <title>Potential virulence determinants in terminal regions of variola smallpox virus genome.</title>
        <authorList>
            <person name="Massung R.F."/>
            <person name="Esposito J.J."/>
            <person name="Liu L.I."/>
            <person name="Qi J."/>
            <person name="Utterback T.R."/>
            <person name="Knight J.C."/>
            <person name="Aubin L."/>
            <person name="Yuran T.E."/>
            <person name="Parsons J.M."/>
            <person name="Loparev V.N."/>
            <person name="Selivanov N.A."/>
            <person name="Cavallaro K.F."/>
            <person name="Kerlavage A.R."/>
            <person name="Mahy B.W.J."/>
            <person name="Venter J.C."/>
        </authorList>
    </citation>
    <scope>NUCLEOTIDE SEQUENCE [GENOMIC DNA]</scope>
    <source>
        <strain>Bangladesh-1975</strain>
    </source>
</reference>
<reference key="2">
    <citation type="submission" date="1994-12" db="EMBL/GenBank/DDBJ databases">
        <authorList>
            <person name="Massung R.F."/>
            <person name="Loparev V.N."/>
            <person name="Knight J.C."/>
            <person name="Chizhikov V.E."/>
            <person name="Parsons J.M."/>
            <person name="Totmenin A.V."/>
            <person name="Shchelkunov S.N."/>
            <person name="Esposito J.J."/>
        </authorList>
    </citation>
    <scope>NUCLEOTIDE SEQUENCE [GENOMIC DNA]</scope>
    <source>
        <strain>Congo-1965</strain>
        <strain>Somalia-1977</strain>
    </source>
</reference>
<evidence type="ECO:0000250" key="1">
    <source>
        <dbReference type="UniProtKB" id="P14357"/>
    </source>
</evidence>
<evidence type="ECO:0000305" key="2"/>
<sequence length="177" mass="21023">MSSSTMDNNEPKVLEMVYDSPILPEGSSMDPNIINCINRHINMCLQHTYSSSIIAILDRFLMMNKDELNNTQCHIIKEFMTYEQMAIDHYGGYVNAILYQIRKRPNQHHTIDLFKKIKRTRYDTFKVDPVEFVKKVIGFVSILNKYKPVYSYVLYENVLYDELKCFIDYVETKYFQN</sequence>
<organism>
    <name type="scientific">Variola virus</name>
    <dbReference type="NCBI Taxonomy" id="10255"/>
    <lineage>
        <taxon>Viruses</taxon>
        <taxon>Varidnaviria</taxon>
        <taxon>Bamfordvirae</taxon>
        <taxon>Nucleocytoviricota</taxon>
        <taxon>Pokkesviricetes</taxon>
        <taxon>Chitovirales</taxon>
        <taxon>Poxviridae</taxon>
        <taxon>Chordopoxvirinae</taxon>
        <taxon>Orthopoxvirus</taxon>
    </lineage>
</organism>
<comment type="function">
    <text evidence="1">Plays a role in the inhibition of host innate immune response. Within the host nucleus, inhibits activation of interferon-beta promoter by inhibiting IRF3 activation.</text>
</comment>
<comment type="subcellular location">
    <subcellularLocation>
        <location evidence="1">Host nucleus</location>
    </subcellularLocation>
</comment>
<comment type="induction">
    <text evidence="1">Expressed in the early phase of the viral replicative cycle.</text>
</comment>
<comment type="similarity">
    <text evidence="2">Belongs to the poxviridae OPG036 family.</text>
</comment>
<organismHost>
    <name type="scientific">Homo sapiens</name>
    <name type="common">Human</name>
    <dbReference type="NCBI Taxonomy" id="9606"/>
</organismHost>